<dbReference type="EC" id="2.3.1.274" evidence="1"/>
<dbReference type="EMBL" id="AL596170">
    <property type="protein sequence ID" value="CAC97153.1"/>
    <property type="molecule type" value="Genomic_DNA"/>
</dbReference>
<dbReference type="PIR" id="AI1672">
    <property type="entry name" value="AI1672"/>
</dbReference>
<dbReference type="RefSeq" id="WP_003767427.1">
    <property type="nucleotide sequence ID" value="NC_003212.1"/>
</dbReference>
<dbReference type="SMR" id="Q92AJ9"/>
<dbReference type="STRING" id="272626.gene:17566281"/>
<dbReference type="GeneID" id="93235261"/>
<dbReference type="KEGG" id="lin:plsX"/>
<dbReference type="eggNOG" id="COG0416">
    <property type="taxonomic scope" value="Bacteria"/>
</dbReference>
<dbReference type="HOGENOM" id="CLU_039379_1_1_9"/>
<dbReference type="OrthoDB" id="9806408at2"/>
<dbReference type="UniPathway" id="UPA00085"/>
<dbReference type="Proteomes" id="UP000002513">
    <property type="component" value="Chromosome"/>
</dbReference>
<dbReference type="GO" id="GO:0005737">
    <property type="term" value="C:cytoplasm"/>
    <property type="evidence" value="ECO:0007669"/>
    <property type="project" value="UniProtKB-SubCell"/>
</dbReference>
<dbReference type="GO" id="GO:0043811">
    <property type="term" value="F:phosphate:acyl-[acyl carrier protein] acyltransferase activity"/>
    <property type="evidence" value="ECO:0007669"/>
    <property type="project" value="UniProtKB-UniRule"/>
</dbReference>
<dbReference type="GO" id="GO:0006633">
    <property type="term" value="P:fatty acid biosynthetic process"/>
    <property type="evidence" value="ECO:0007669"/>
    <property type="project" value="UniProtKB-UniRule"/>
</dbReference>
<dbReference type="GO" id="GO:0008654">
    <property type="term" value="P:phospholipid biosynthetic process"/>
    <property type="evidence" value="ECO:0007669"/>
    <property type="project" value="UniProtKB-KW"/>
</dbReference>
<dbReference type="Gene3D" id="3.40.718.10">
    <property type="entry name" value="Isopropylmalate Dehydrogenase"/>
    <property type="match status" value="1"/>
</dbReference>
<dbReference type="HAMAP" id="MF_00019">
    <property type="entry name" value="PlsX"/>
    <property type="match status" value="1"/>
</dbReference>
<dbReference type="InterPro" id="IPR003664">
    <property type="entry name" value="FA_synthesis"/>
</dbReference>
<dbReference type="InterPro" id="IPR012281">
    <property type="entry name" value="Phospholipid_synth_PlsX-like"/>
</dbReference>
<dbReference type="NCBIfam" id="TIGR00182">
    <property type="entry name" value="plsX"/>
    <property type="match status" value="1"/>
</dbReference>
<dbReference type="PANTHER" id="PTHR30100">
    <property type="entry name" value="FATTY ACID/PHOSPHOLIPID SYNTHESIS PROTEIN PLSX"/>
    <property type="match status" value="1"/>
</dbReference>
<dbReference type="PANTHER" id="PTHR30100:SF1">
    <property type="entry name" value="PHOSPHATE ACYLTRANSFERASE"/>
    <property type="match status" value="1"/>
</dbReference>
<dbReference type="Pfam" id="PF02504">
    <property type="entry name" value="FA_synthesis"/>
    <property type="match status" value="1"/>
</dbReference>
<dbReference type="PIRSF" id="PIRSF002465">
    <property type="entry name" value="Phsphlp_syn_PlsX"/>
    <property type="match status" value="1"/>
</dbReference>
<dbReference type="SUPFAM" id="SSF53659">
    <property type="entry name" value="Isocitrate/Isopropylmalate dehydrogenase-like"/>
    <property type="match status" value="1"/>
</dbReference>
<feature type="chain" id="PRO_0000189898" description="Phosphate acyltransferase">
    <location>
        <begin position="1"/>
        <end position="337"/>
    </location>
</feature>
<gene>
    <name evidence="1" type="primary">plsX</name>
    <name type="ordered locus">lin1923</name>
</gene>
<keyword id="KW-0963">Cytoplasm</keyword>
<keyword id="KW-0444">Lipid biosynthesis</keyword>
<keyword id="KW-0443">Lipid metabolism</keyword>
<keyword id="KW-0594">Phospholipid biosynthesis</keyword>
<keyword id="KW-1208">Phospholipid metabolism</keyword>
<keyword id="KW-0808">Transferase</keyword>
<sequence length="337" mass="36511">MKIAVDAMGGDHAPKEIVLGVMKAVAQYKDIEILLFGDETKINEHLTDKTRVKIIHTDEKIESDDEPVRAVKRKKKASMVLAAQAVKDGEADACISAGNTGALMSTGLFVIGRIKGIDRPALAPTLPTVTGKGFVMLDLGANAEAKPEHLLQFGLMGSVYAEKVRKIERPRVALLNIGTEETKGNELTKKSFELMKNQDAYEFIGNIEARDLLMDVADVVVTDGFTGNMVLKSIEGTGAAFLSMLKMSLLNGFKNKVAASFLKKDLMELKAKMDYSEYGGACLFGVQAPVVKAHGSSNANGIFTTIRQVREMVEKQVVETIKSEVDKVKVGGTETND</sequence>
<protein>
    <recommendedName>
        <fullName evidence="1">Phosphate acyltransferase</fullName>
        <ecNumber evidence="1">2.3.1.274</ecNumber>
    </recommendedName>
    <alternativeName>
        <fullName evidence="1">Acyl-ACP phosphotransacylase</fullName>
    </alternativeName>
    <alternativeName>
        <fullName evidence="1">Acyl-[acyl-carrier-protein]--phosphate acyltransferase</fullName>
    </alternativeName>
    <alternativeName>
        <fullName evidence="1">Phosphate-acyl-ACP acyltransferase</fullName>
    </alternativeName>
</protein>
<accession>Q92AJ9</accession>
<name>PLSX_LISIN</name>
<reference key="1">
    <citation type="journal article" date="2001" name="Science">
        <title>Comparative genomics of Listeria species.</title>
        <authorList>
            <person name="Glaser P."/>
            <person name="Frangeul L."/>
            <person name="Buchrieser C."/>
            <person name="Rusniok C."/>
            <person name="Amend A."/>
            <person name="Baquero F."/>
            <person name="Berche P."/>
            <person name="Bloecker H."/>
            <person name="Brandt P."/>
            <person name="Chakraborty T."/>
            <person name="Charbit A."/>
            <person name="Chetouani F."/>
            <person name="Couve E."/>
            <person name="de Daruvar A."/>
            <person name="Dehoux P."/>
            <person name="Domann E."/>
            <person name="Dominguez-Bernal G."/>
            <person name="Duchaud E."/>
            <person name="Durant L."/>
            <person name="Dussurget O."/>
            <person name="Entian K.-D."/>
            <person name="Fsihi H."/>
            <person name="Garcia-del Portillo F."/>
            <person name="Garrido P."/>
            <person name="Gautier L."/>
            <person name="Goebel W."/>
            <person name="Gomez-Lopez N."/>
            <person name="Hain T."/>
            <person name="Hauf J."/>
            <person name="Jackson D."/>
            <person name="Jones L.-M."/>
            <person name="Kaerst U."/>
            <person name="Kreft J."/>
            <person name="Kuhn M."/>
            <person name="Kunst F."/>
            <person name="Kurapkat G."/>
            <person name="Madueno E."/>
            <person name="Maitournam A."/>
            <person name="Mata Vicente J."/>
            <person name="Ng E."/>
            <person name="Nedjari H."/>
            <person name="Nordsiek G."/>
            <person name="Novella S."/>
            <person name="de Pablos B."/>
            <person name="Perez-Diaz J.-C."/>
            <person name="Purcell R."/>
            <person name="Remmel B."/>
            <person name="Rose M."/>
            <person name="Schlueter T."/>
            <person name="Simoes N."/>
            <person name="Tierrez A."/>
            <person name="Vazquez-Boland J.-A."/>
            <person name="Voss H."/>
            <person name="Wehland J."/>
            <person name="Cossart P."/>
        </authorList>
    </citation>
    <scope>NUCLEOTIDE SEQUENCE [LARGE SCALE GENOMIC DNA]</scope>
    <source>
        <strain>ATCC BAA-680 / CLIP 11262</strain>
    </source>
</reference>
<comment type="function">
    <text evidence="1">Catalyzes the reversible formation of acyl-phosphate (acyl-PO(4)) from acyl-[acyl-carrier-protein] (acyl-ACP). This enzyme utilizes acyl-ACP as fatty acyl donor, but not acyl-CoA.</text>
</comment>
<comment type="catalytic activity">
    <reaction evidence="1">
        <text>a fatty acyl-[ACP] + phosphate = an acyl phosphate + holo-[ACP]</text>
        <dbReference type="Rhea" id="RHEA:42292"/>
        <dbReference type="Rhea" id="RHEA-COMP:9685"/>
        <dbReference type="Rhea" id="RHEA-COMP:14125"/>
        <dbReference type="ChEBI" id="CHEBI:43474"/>
        <dbReference type="ChEBI" id="CHEBI:59918"/>
        <dbReference type="ChEBI" id="CHEBI:64479"/>
        <dbReference type="ChEBI" id="CHEBI:138651"/>
        <dbReference type="EC" id="2.3.1.274"/>
    </reaction>
</comment>
<comment type="pathway">
    <text evidence="1">Lipid metabolism; phospholipid metabolism.</text>
</comment>
<comment type="subunit">
    <text evidence="1">Homodimer. Probably interacts with PlsY.</text>
</comment>
<comment type="subcellular location">
    <subcellularLocation>
        <location evidence="1">Cytoplasm</location>
    </subcellularLocation>
    <text evidence="1">Associated with the membrane possibly through PlsY.</text>
</comment>
<comment type="similarity">
    <text evidence="1">Belongs to the PlsX family.</text>
</comment>
<evidence type="ECO:0000255" key="1">
    <source>
        <dbReference type="HAMAP-Rule" id="MF_00019"/>
    </source>
</evidence>
<proteinExistence type="inferred from homology"/>
<organism>
    <name type="scientific">Listeria innocua serovar 6a (strain ATCC BAA-680 / CLIP 11262)</name>
    <dbReference type="NCBI Taxonomy" id="272626"/>
    <lineage>
        <taxon>Bacteria</taxon>
        <taxon>Bacillati</taxon>
        <taxon>Bacillota</taxon>
        <taxon>Bacilli</taxon>
        <taxon>Bacillales</taxon>
        <taxon>Listeriaceae</taxon>
        <taxon>Listeria</taxon>
    </lineage>
</organism>